<reference key="1">
    <citation type="journal article" date="2004" name="Biol. J. Linn. Soc. Lond.">
        <title>Genets (Carnivora, Viverridae) in Africa: an evolutionary synthesis based on cytochrome b sequences and morphological characters.</title>
        <authorList>
            <person name="Gaubert P."/>
            <person name="Fernandes C.A."/>
            <person name="Bruford M.W."/>
            <person name="Veron G."/>
        </authorList>
    </citation>
    <scope>NUCLEOTIDE SEQUENCE [GENOMIC DNA]</scope>
</reference>
<reference key="2">
    <citation type="journal article" date="2004" name="Zool. Scr.">
        <title>First molecular evidence for reassessing phylogenetic affinities between genets (Genetta) and the enigmatic genet-like taxa Osbornictis, Poiana and Prionodon (Carnivora, Viverridae).</title>
        <authorList>
            <person name="Gaubert P."/>
            <person name="Tranier M."/>
            <person name="Delmas A.-S."/>
            <person name="Colyn M."/>
            <person name="Veron G."/>
        </authorList>
    </citation>
    <scope>NUCLEOTIDE SEQUENCE [GENOMIC DNA]</scope>
</reference>
<protein>
    <recommendedName>
        <fullName>Cytochrome b</fullName>
    </recommendedName>
    <alternativeName>
        <fullName>Complex III subunit 3</fullName>
    </alternativeName>
    <alternativeName>
        <fullName>Complex III subunit III</fullName>
    </alternativeName>
    <alternativeName>
        <fullName>Cytochrome b-c1 complex subunit 3</fullName>
    </alternativeName>
    <alternativeName>
        <fullName>Ubiquinol-cytochrome-c reductase complex cytochrome b subunit</fullName>
    </alternativeName>
</protein>
<organism>
    <name type="scientific">Genetta thierryi</name>
    <name type="common">Thierry's genet</name>
    <name type="synonym">Haussa genet</name>
    <dbReference type="NCBI Taxonomy" id="205597"/>
    <lineage>
        <taxon>Eukaryota</taxon>
        <taxon>Metazoa</taxon>
        <taxon>Chordata</taxon>
        <taxon>Craniata</taxon>
        <taxon>Vertebrata</taxon>
        <taxon>Euteleostomi</taxon>
        <taxon>Mammalia</taxon>
        <taxon>Eutheria</taxon>
        <taxon>Laurasiatheria</taxon>
        <taxon>Carnivora</taxon>
        <taxon>Feliformia</taxon>
        <taxon>Viverridae</taxon>
        <taxon>Viverrinae</taxon>
        <taxon>Genetta</taxon>
    </lineage>
</organism>
<proteinExistence type="inferred from homology"/>
<comment type="function">
    <text evidence="2">Component of the ubiquinol-cytochrome c reductase complex (complex III or cytochrome b-c1 complex) that is part of the mitochondrial respiratory chain. The b-c1 complex mediates electron transfer from ubiquinol to cytochrome c. Contributes to the generation of a proton gradient across the mitochondrial membrane that is then used for ATP synthesis.</text>
</comment>
<comment type="cofactor">
    <cofactor evidence="2">
        <name>heme b</name>
        <dbReference type="ChEBI" id="CHEBI:60344"/>
    </cofactor>
    <text evidence="2">Binds 2 heme b groups non-covalently.</text>
</comment>
<comment type="subunit">
    <text evidence="2">The cytochrome bc1 complex contains 11 subunits: 3 respiratory subunits (MT-CYB, CYC1 and UQCRFS1), 2 core proteins (UQCRC1 and UQCRC2) and 6 low-molecular weight proteins (UQCRH/QCR6, UQCRB/QCR7, UQCRQ/QCR8, UQCR10/QCR9, UQCR11/QCR10 and a cleavage product of UQCRFS1). This cytochrome bc1 complex then forms a dimer.</text>
</comment>
<comment type="subcellular location">
    <subcellularLocation>
        <location evidence="2">Mitochondrion inner membrane</location>
        <topology evidence="2">Multi-pass membrane protein</topology>
    </subcellularLocation>
</comment>
<comment type="miscellaneous">
    <text evidence="1">Heme 1 (or BL or b562) is low-potential and absorbs at about 562 nm, and heme 2 (or BH or b566) is high-potential and absorbs at about 566 nm.</text>
</comment>
<comment type="similarity">
    <text evidence="3 4">Belongs to the cytochrome b family.</text>
</comment>
<comment type="caution">
    <text evidence="2">The full-length protein contains only eight transmembrane helices, not nine as predicted by bioinformatics tools.</text>
</comment>
<evidence type="ECO:0000250" key="1"/>
<evidence type="ECO:0000250" key="2">
    <source>
        <dbReference type="UniProtKB" id="P00157"/>
    </source>
</evidence>
<evidence type="ECO:0000255" key="3">
    <source>
        <dbReference type="PROSITE-ProRule" id="PRU00967"/>
    </source>
</evidence>
<evidence type="ECO:0000255" key="4">
    <source>
        <dbReference type="PROSITE-ProRule" id="PRU00968"/>
    </source>
</evidence>
<gene>
    <name type="primary">MT-CYB</name>
    <name type="synonym">COB</name>
    <name type="synonym">CYTB</name>
    <name type="synonym">MTCYB</name>
</gene>
<accession>Q6XBW4</accession>
<name>CYB_GENTH</name>
<dbReference type="EMBL" id="AY241893">
    <property type="protein sequence ID" value="AAP73013.1"/>
    <property type="molecule type" value="Genomic_DNA"/>
</dbReference>
<dbReference type="EMBL" id="AF511052">
    <property type="protein sequence ID" value="AAQ08028.1"/>
    <property type="molecule type" value="Genomic_DNA"/>
</dbReference>
<dbReference type="SMR" id="Q6XBW4"/>
<dbReference type="GO" id="GO:0005743">
    <property type="term" value="C:mitochondrial inner membrane"/>
    <property type="evidence" value="ECO:0007669"/>
    <property type="project" value="UniProtKB-SubCell"/>
</dbReference>
<dbReference type="GO" id="GO:0045275">
    <property type="term" value="C:respiratory chain complex III"/>
    <property type="evidence" value="ECO:0007669"/>
    <property type="project" value="InterPro"/>
</dbReference>
<dbReference type="GO" id="GO:0046872">
    <property type="term" value="F:metal ion binding"/>
    <property type="evidence" value="ECO:0007669"/>
    <property type="project" value="UniProtKB-KW"/>
</dbReference>
<dbReference type="GO" id="GO:0008121">
    <property type="term" value="F:ubiquinol-cytochrome-c reductase activity"/>
    <property type="evidence" value="ECO:0007669"/>
    <property type="project" value="InterPro"/>
</dbReference>
<dbReference type="GO" id="GO:0006122">
    <property type="term" value="P:mitochondrial electron transport, ubiquinol to cytochrome c"/>
    <property type="evidence" value="ECO:0007669"/>
    <property type="project" value="TreeGrafter"/>
</dbReference>
<dbReference type="CDD" id="cd00290">
    <property type="entry name" value="cytochrome_b_C"/>
    <property type="match status" value="1"/>
</dbReference>
<dbReference type="CDD" id="cd00284">
    <property type="entry name" value="Cytochrome_b_N"/>
    <property type="match status" value="1"/>
</dbReference>
<dbReference type="FunFam" id="1.20.810.10:FF:000002">
    <property type="entry name" value="Cytochrome b"/>
    <property type="match status" value="1"/>
</dbReference>
<dbReference type="Gene3D" id="1.20.810.10">
    <property type="entry name" value="Cytochrome Bc1 Complex, Chain C"/>
    <property type="match status" value="1"/>
</dbReference>
<dbReference type="InterPro" id="IPR005798">
    <property type="entry name" value="Cyt_b/b6_C"/>
</dbReference>
<dbReference type="InterPro" id="IPR036150">
    <property type="entry name" value="Cyt_b/b6_C_sf"/>
</dbReference>
<dbReference type="InterPro" id="IPR005797">
    <property type="entry name" value="Cyt_b/b6_N"/>
</dbReference>
<dbReference type="InterPro" id="IPR027387">
    <property type="entry name" value="Cytb/b6-like_sf"/>
</dbReference>
<dbReference type="InterPro" id="IPR030689">
    <property type="entry name" value="Cytochrome_b"/>
</dbReference>
<dbReference type="InterPro" id="IPR048260">
    <property type="entry name" value="Cytochrome_b_C_euk/bac"/>
</dbReference>
<dbReference type="InterPro" id="IPR048259">
    <property type="entry name" value="Cytochrome_b_N_euk/bac"/>
</dbReference>
<dbReference type="InterPro" id="IPR016174">
    <property type="entry name" value="Di-haem_cyt_TM"/>
</dbReference>
<dbReference type="PANTHER" id="PTHR19271">
    <property type="entry name" value="CYTOCHROME B"/>
    <property type="match status" value="1"/>
</dbReference>
<dbReference type="PANTHER" id="PTHR19271:SF16">
    <property type="entry name" value="CYTOCHROME B"/>
    <property type="match status" value="1"/>
</dbReference>
<dbReference type="Pfam" id="PF00032">
    <property type="entry name" value="Cytochrom_B_C"/>
    <property type="match status" value="1"/>
</dbReference>
<dbReference type="Pfam" id="PF00033">
    <property type="entry name" value="Cytochrome_B"/>
    <property type="match status" value="1"/>
</dbReference>
<dbReference type="PIRSF" id="PIRSF038885">
    <property type="entry name" value="COB"/>
    <property type="match status" value="1"/>
</dbReference>
<dbReference type="SUPFAM" id="SSF81648">
    <property type="entry name" value="a domain/subunit of cytochrome bc1 complex (Ubiquinol-cytochrome c reductase)"/>
    <property type="match status" value="1"/>
</dbReference>
<dbReference type="SUPFAM" id="SSF81342">
    <property type="entry name" value="Transmembrane di-heme cytochromes"/>
    <property type="match status" value="1"/>
</dbReference>
<dbReference type="PROSITE" id="PS51003">
    <property type="entry name" value="CYTB_CTER"/>
    <property type="match status" value="1"/>
</dbReference>
<dbReference type="PROSITE" id="PS51002">
    <property type="entry name" value="CYTB_NTER"/>
    <property type="match status" value="1"/>
</dbReference>
<keyword id="KW-0249">Electron transport</keyword>
<keyword id="KW-0349">Heme</keyword>
<keyword id="KW-0408">Iron</keyword>
<keyword id="KW-0472">Membrane</keyword>
<keyword id="KW-0479">Metal-binding</keyword>
<keyword id="KW-0496">Mitochondrion</keyword>
<keyword id="KW-0999">Mitochondrion inner membrane</keyword>
<keyword id="KW-0679">Respiratory chain</keyword>
<keyword id="KW-0812">Transmembrane</keyword>
<keyword id="KW-1133">Transmembrane helix</keyword>
<keyword id="KW-0813">Transport</keyword>
<keyword id="KW-0830">Ubiquinone</keyword>
<feature type="chain" id="PRO_0000254694" description="Cytochrome b">
    <location>
        <begin position="1"/>
        <end position="379"/>
    </location>
</feature>
<feature type="transmembrane region" description="Helical" evidence="2">
    <location>
        <begin position="33"/>
        <end position="53"/>
    </location>
</feature>
<feature type="transmembrane region" description="Helical" evidence="2">
    <location>
        <begin position="77"/>
        <end position="98"/>
    </location>
</feature>
<feature type="transmembrane region" description="Helical" evidence="2">
    <location>
        <begin position="113"/>
        <end position="133"/>
    </location>
</feature>
<feature type="transmembrane region" description="Helical" evidence="2">
    <location>
        <begin position="178"/>
        <end position="198"/>
    </location>
</feature>
<feature type="transmembrane region" description="Helical" evidence="2">
    <location>
        <begin position="226"/>
        <end position="246"/>
    </location>
</feature>
<feature type="transmembrane region" description="Helical" evidence="2">
    <location>
        <begin position="288"/>
        <end position="308"/>
    </location>
</feature>
<feature type="transmembrane region" description="Helical" evidence="2">
    <location>
        <begin position="320"/>
        <end position="340"/>
    </location>
</feature>
<feature type="transmembrane region" description="Helical" evidence="2">
    <location>
        <begin position="347"/>
        <end position="367"/>
    </location>
</feature>
<feature type="binding site" description="axial binding residue" evidence="2">
    <location>
        <position position="83"/>
    </location>
    <ligand>
        <name>heme b</name>
        <dbReference type="ChEBI" id="CHEBI:60344"/>
        <label>b562</label>
    </ligand>
    <ligandPart>
        <name>Fe</name>
        <dbReference type="ChEBI" id="CHEBI:18248"/>
    </ligandPart>
</feature>
<feature type="binding site" description="axial binding residue" evidence="2">
    <location>
        <position position="97"/>
    </location>
    <ligand>
        <name>heme b</name>
        <dbReference type="ChEBI" id="CHEBI:60344"/>
        <label>b566</label>
    </ligand>
    <ligandPart>
        <name>Fe</name>
        <dbReference type="ChEBI" id="CHEBI:18248"/>
    </ligandPart>
</feature>
<feature type="binding site" description="axial binding residue" evidence="2">
    <location>
        <position position="182"/>
    </location>
    <ligand>
        <name>heme b</name>
        <dbReference type="ChEBI" id="CHEBI:60344"/>
        <label>b562</label>
    </ligand>
    <ligandPart>
        <name>Fe</name>
        <dbReference type="ChEBI" id="CHEBI:18248"/>
    </ligandPart>
</feature>
<feature type="binding site" description="axial binding residue" evidence="2">
    <location>
        <position position="196"/>
    </location>
    <ligand>
        <name>heme b</name>
        <dbReference type="ChEBI" id="CHEBI:60344"/>
        <label>b566</label>
    </ligand>
    <ligandPart>
        <name>Fe</name>
        <dbReference type="ChEBI" id="CHEBI:18248"/>
    </ligandPart>
</feature>
<feature type="binding site" evidence="2">
    <location>
        <position position="201"/>
    </location>
    <ligand>
        <name>a ubiquinone</name>
        <dbReference type="ChEBI" id="CHEBI:16389"/>
    </ligand>
</feature>
<geneLocation type="mitochondrion"/>
<sequence length="379" mass="42681">MTNIRKSHPLVKIINESFIDLPAPSNISAWWNFGSLLGVCLIIQILTGLFLAMHYTSDTTTAFSSVTHICRDVNYGWIIRYMHANGASMFFICLFMHVGRGVYYGSYTFTETWNIGILLMFTVMATAFMGYVLPWGQMSFWGATVITNLLSAIPYIGTNLVEWIWGGFSVDKATLTRFFAFHFILPFIISALAAVHLLFLHETGSNNPSGVMSNSDKIPFHPYYTIKDILGLLLLILVLMLLVLFSPDLLGDPDNYIPANPLNTPPHIKPEWYFLFAYAILRSIPNKLGGVLALVLSILVLAIIPLLHTSKQRSMMFRPMSQCLFWLLVADLLTLTWIGGQPVEHPFITIGQLASILYFSIFLILMPASGIIENRLLKW</sequence>